<sequence>MAATTPAQDVGVEIYLGPVWPAPSNSTPLALNLSLALREDAPGNLTGDLSEHQQYVIALFLSCLYTIFLFPIGFVGNILILVVNISFREKMTIPDLYFINLAAADLILVADSLIEVFNLDEQYYDIAVLCTFMSLFLQINMYSSVFFLTWMSFDRYLALAKAMRCGLFRTKHHARLSCGLIWMASVSATLVPFTAVHLRHTEEACFCFADVREVQWLEVTLGFIVPFAIIGLCYSLIVRALIRAHRHRGLRPRRQKALRMIFAVVLVFFICWLPENVFISVHLLQWAQPGDTPCKQSFRHAYPLTGHIVNLAAFSNSCLSPLIYSFLGETFRDKLRLYVAQKTSLPALNRFCHATLKAVIPDSTEQSDVKFSSAV</sequence>
<proteinExistence type="evidence at protein level"/>
<name>GPER1_RAT</name>
<dbReference type="EMBL" id="U92802">
    <property type="protein sequence ID" value="AAC53208.1"/>
    <property type="molecule type" value="mRNA"/>
</dbReference>
<dbReference type="PIR" id="JC5509">
    <property type="entry name" value="JC5509"/>
</dbReference>
<dbReference type="RefSeq" id="NP_598257.1">
    <property type="nucleotide sequence ID" value="NM_133573.1"/>
</dbReference>
<dbReference type="SMR" id="O08878"/>
<dbReference type="CORUM" id="O08878"/>
<dbReference type="FunCoup" id="O08878">
    <property type="interactions" value="257"/>
</dbReference>
<dbReference type="STRING" id="10116.ENSRNOP00000001732"/>
<dbReference type="BindingDB" id="O08878"/>
<dbReference type="ChEMBL" id="CHEMBL3309103"/>
<dbReference type="GlyCosmos" id="O08878">
    <property type="glycosylation" value="2 sites, No reported glycans"/>
</dbReference>
<dbReference type="GlyGen" id="O08878">
    <property type="glycosylation" value="3 sites"/>
</dbReference>
<dbReference type="PhosphoSitePlus" id="O08878"/>
<dbReference type="PaxDb" id="10116-ENSRNOP00000001732"/>
<dbReference type="GeneID" id="171104"/>
<dbReference type="KEGG" id="rno:171104"/>
<dbReference type="UCSC" id="RGD:619845">
    <property type="organism name" value="rat"/>
</dbReference>
<dbReference type="AGR" id="RGD:619845"/>
<dbReference type="CTD" id="2852"/>
<dbReference type="RGD" id="619845">
    <property type="gene designation" value="Gper1"/>
</dbReference>
<dbReference type="eggNOG" id="ENOG502QU56">
    <property type="taxonomic scope" value="Eukaryota"/>
</dbReference>
<dbReference type="InParanoid" id="O08878"/>
<dbReference type="OrthoDB" id="5957382at2759"/>
<dbReference type="PhylomeDB" id="O08878"/>
<dbReference type="Reactome" id="R-RNO-375276">
    <property type="pathway name" value="Peptide ligand-binding receptors"/>
</dbReference>
<dbReference type="Reactome" id="R-RNO-418594">
    <property type="pathway name" value="G alpha (i) signalling events"/>
</dbReference>
<dbReference type="PRO" id="PR:O08878"/>
<dbReference type="Proteomes" id="UP000002494">
    <property type="component" value="Unplaced"/>
</dbReference>
<dbReference type="GO" id="GO:0030424">
    <property type="term" value="C:axon"/>
    <property type="evidence" value="ECO:0000314"/>
    <property type="project" value="UniProtKB"/>
</dbReference>
<dbReference type="GO" id="GO:0043679">
    <property type="term" value="C:axon terminus"/>
    <property type="evidence" value="ECO:0000314"/>
    <property type="project" value="UniProtKB"/>
</dbReference>
<dbReference type="GO" id="GO:0005737">
    <property type="term" value="C:cytoplasm"/>
    <property type="evidence" value="ECO:0000314"/>
    <property type="project" value="UniProtKB"/>
</dbReference>
<dbReference type="GO" id="GO:0030659">
    <property type="term" value="C:cytoplasmic vesicle membrane"/>
    <property type="evidence" value="ECO:0000250"/>
    <property type="project" value="UniProtKB"/>
</dbReference>
<dbReference type="GO" id="GO:0030425">
    <property type="term" value="C:dendrite"/>
    <property type="evidence" value="ECO:0000314"/>
    <property type="project" value="UniProtKB"/>
</dbReference>
<dbReference type="GO" id="GO:0043198">
    <property type="term" value="C:dendritic shaft"/>
    <property type="evidence" value="ECO:0000314"/>
    <property type="project" value="UniProtKB"/>
</dbReference>
<dbReference type="GO" id="GO:0044327">
    <property type="term" value="C:dendritic spine head"/>
    <property type="evidence" value="ECO:0000314"/>
    <property type="project" value="UniProtKB"/>
</dbReference>
<dbReference type="GO" id="GO:0032591">
    <property type="term" value="C:dendritic spine membrane"/>
    <property type="evidence" value="ECO:0000314"/>
    <property type="project" value="UniProtKB"/>
</dbReference>
<dbReference type="GO" id="GO:0005769">
    <property type="term" value="C:early endosome"/>
    <property type="evidence" value="ECO:0000250"/>
    <property type="project" value="UniProtKB"/>
</dbReference>
<dbReference type="GO" id="GO:0005783">
    <property type="term" value="C:endoplasmic reticulum"/>
    <property type="evidence" value="ECO:0000250"/>
    <property type="project" value="UniProtKB"/>
</dbReference>
<dbReference type="GO" id="GO:0005789">
    <property type="term" value="C:endoplasmic reticulum membrane"/>
    <property type="evidence" value="ECO:0000314"/>
    <property type="project" value="RGD"/>
</dbReference>
<dbReference type="GO" id="GO:0005794">
    <property type="term" value="C:Golgi apparatus"/>
    <property type="evidence" value="ECO:0000314"/>
    <property type="project" value="UniProtKB"/>
</dbReference>
<dbReference type="GO" id="GO:0000139">
    <property type="term" value="C:Golgi membrane"/>
    <property type="evidence" value="ECO:0007669"/>
    <property type="project" value="UniProtKB-SubCell"/>
</dbReference>
<dbReference type="GO" id="GO:0098686">
    <property type="term" value="C:hippocampal mossy fiber to CA3 synapse"/>
    <property type="evidence" value="ECO:0000266"/>
    <property type="project" value="RGD"/>
</dbReference>
<dbReference type="GO" id="GO:0045095">
    <property type="term" value="C:keratin filament"/>
    <property type="evidence" value="ECO:0000250"/>
    <property type="project" value="UniProtKB"/>
</dbReference>
<dbReference type="GO" id="GO:0031966">
    <property type="term" value="C:mitochondrial membrane"/>
    <property type="evidence" value="ECO:0000314"/>
    <property type="project" value="UniProtKB"/>
</dbReference>
<dbReference type="GO" id="GO:0043025">
    <property type="term" value="C:neuronal cell body"/>
    <property type="evidence" value="ECO:0000314"/>
    <property type="project" value="RGD"/>
</dbReference>
<dbReference type="GO" id="GO:0005635">
    <property type="term" value="C:nuclear envelope"/>
    <property type="evidence" value="ECO:0000250"/>
    <property type="project" value="UniProtKB"/>
</dbReference>
<dbReference type="GO" id="GO:0005634">
    <property type="term" value="C:nucleus"/>
    <property type="evidence" value="ECO:0000250"/>
    <property type="project" value="UniProtKB"/>
</dbReference>
<dbReference type="GO" id="GO:0048471">
    <property type="term" value="C:perinuclear region of cytoplasm"/>
    <property type="evidence" value="ECO:0000250"/>
    <property type="project" value="UniProtKB"/>
</dbReference>
<dbReference type="GO" id="GO:0005886">
    <property type="term" value="C:plasma membrane"/>
    <property type="evidence" value="ECO:0000314"/>
    <property type="project" value="UniProtKB"/>
</dbReference>
<dbReference type="GO" id="GO:0014069">
    <property type="term" value="C:postsynaptic density"/>
    <property type="evidence" value="ECO:0000314"/>
    <property type="project" value="UniProtKB"/>
</dbReference>
<dbReference type="GO" id="GO:0048786">
    <property type="term" value="C:presynaptic active zone"/>
    <property type="evidence" value="ECO:0000314"/>
    <property type="project" value="UniProtKB"/>
</dbReference>
<dbReference type="GO" id="GO:0042734">
    <property type="term" value="C:presynaptic membrane"/>
    <property type="evidence" value="ECO:0000314"/>
    <property type="project" value="UniProtKB"/>
</dbReference>
<dbReference type="GO" id="GO:0055037">
    <property type="term" value="C:recycling endosome"/>
    <property type="evidence" value="ECO:0000250"/>
    <property type="project" value="UniProtKB"/>
</dbReference>
<dbReference type="GO" id="GO:0005802">
    <property type="term" value="C:trans-Golgi network"/>
    <property type="evidence" value="ECO:0000250"/>
    <property type="project" value="UniProtKB"/>
</dbReference>
<dbReference type="GO" id="GO:0003682">
    <property type="term" value="F:chromatin binding"/>
    <property type="evidence" value="ECO:0000266"/>
    <property type="project" value="RGD"/>
</dbReference>
<dbReference type="GO" id="GO:1903924">
    <property type="term" value="F:estradiol binding"/>
    <property type="evidence" value="ECO:0000315"/>
    <property type="project" value="RGD"/>
</dbReference>
<dbReference type="GO" id="GO:0038054">
    <property type="term" value="F:G protein-coupled estrogen receptor activity"/>
    <property type="evidence" value="ECO:0000314"/>
    <property type="project" value="UniProtKB"/>
</dbReference>
<dbReference type="GO" id="GO:0030284">
    <property type="term" value="F:nuclear estrogen receptor activity"/>
    <property type="evidence" value="ECO:0000266"/>
    <property type="project" value="RGD"/>
</dbReference>
<dbReference type="GO" id="GO:0005496">
    <property type="term" value="F:steroid binding"/>
    <property type="evidence" value="ECO:0000266"/>
    <property type="project" value="RGD"/>
</dbReference>
<dbReference type="GO" id="GO:1990239">
    <property type="term" value="F:steroid hormone binding"/>
    <property type="evidence" value="ECO:0000250"/>
    <property type="project" value="UniProtKB"/>
</dbReference>
<dbReference type="GO" id="GO:0007189">
    <property type="term" value="P:adenylate cyclase-activating G protein-coupled receptor signaling pathway"/>
    <property type="evidence" value="ECO:0000250"/>
    <property type="project" value="UniProtKB"/>
</dbReference>
<dbReference type="GO" id="GO:0030263">
    <property type="term" value="P:apoptotic chromosome condensation"/>
    <property type="evidence" value="ECO:0000314"/>
    <property type="project" value="UniProtKB"/>
</dbReference>
<dbReference type="GO" id="GO:0030154">
    <property type="term" value="P:cell differentiation"/>
    <property type="evidence" value="ECO:0007669"/>
    <property type="project" value="UniProtKB-KW"/>
</dbReference>
<dbReference type="GO" id="GO:0071392">
    <property type="term" value="P:cellular response to estradiol stimulus"/>
    <property type="evidence" value="ECO:0000314"/>
    <property type="project" value="UniProtKB"/>
</dbReference>
<dbReference type="GO" id="GO:0071333">
    <property type="term" value="P:cellular response to glucose stimulus"/>
    <property type="evidence" value="ECO:0000250"/>
    <property type="project" value="UniProtKB"/>
</dbReference>
<dbReference type="GO" id="GO:0071389">
    <property type="term" value="P:cellular response to mineralocorticoid stimulus"/>
    <property type="evidence" value="ECO:0000314"/>
    <property type="project" value="UniProtKB"/>
</dbReference>
<dbReference type="GO" id="GO:0071375">
    <property type="term" value="P:cellular response to peptide hormone stimulus"/>
    <property type="evidence" value="ECO:0000250"/>
    <property type="project" value="UniProtKB"/>
</dbReference>
<dbReference type="GO" id="GO:0071356">
    <property type="term" value="P:cellular response to tumor necrosis factor"/>
    <property type="evidence" value="ECO:0000250"/>
    <property type="project" value="UniProtKB"/>
</dbReference>
<dbReference type="GO" id="GO:0030520">
    <property type="term" value="P:estrogen receptor signaling pathway"/>
    <property type="evidence" value="ECO:0000315"/>
    <property type="project" value="RGD"/>
</dbReference>
<dbReference type="GO" id="GO:0007186">
    <property type="term" value="P:G protein-coupled receptor signaling pathway"/>
    <property type="evidence" value="ECO:0000266"/>
    <property type="project" value="RGD"/>
</dbReference>
<dbReference type="GO" id="GO:0006954">
    <property type="term" value="P:inflammatory response"/>
    <property type="evidence" value="ECO:0007669"/>
    <property type="project" value="UniProtKB-KW"/>
</dbReference>
<dbReference type="GO" id="GO:0045087">
    <property type="term" value="P:innate immune response"/>
    <property type="evidence" value="ECO:0007669"/>
    <property type="project" value="UniProtKB-KW"/>
</dbReference>
<dbReference type="GO" id="GO:0050804">
    <property type="term" value="P:modulation of chemical synaptic transmission"/>
    <property type="evidence" value="ECO:0000266"/>
    <property type="project" value="RGD"/>
</dbReference>
<dbReference type="GO" id="GO:0010948">
    <property type="term" value="P:negative regulation of cell cycle process"/>
    <property type="evidence" value="ECO:0000266"/>
    <property type="project" value="RGD"/>
</dbReference>
<dbReference type="GO" id="GO:0008285">
    <property type="term" value="P:negative regulation of cell population proliferation"/>
    <property type="evidence" value="ECO:0000314"/>
    <property type="project" value="UniProtKB"/>
</dbReference>
<dbReference type="GO" id="GO:0070373">
    <property type="term" value="P:negative regulation of ERK1 and ERK2 cascade"/>
    <property type="evidence" value="ECO:0000266"/>
    <property type="project" value="RGD"/>
</dbReference>
<dbReference type="GO" id="GO:0045599">
    <property type="term" value="P:negative regulation of fat cell differentiation"/>
    <property type="evidence" value="ECO:0000250"/>
    <property type="project" value="UniProtKB"/>
</dbReference>
<dbReference type="GO" id="GO:0010629">
    <property type="term" value="P:negative regulation of gene expression"/>
    <property type="evidence" value="ECO:0000314"/>
    <property type="project" value="UniProtKB"/>
</dbReference>
<dbReference type="GO" id="GO:0050728">
    <property type="term" value="P:negative regulation of inflammatory response"/>
    <property type="evidence" value="ECO:0000250"/>
    <property type="project" value="UniProtKB"/>
</dbReference>
<dbReference type="GO" id="GO:0002695">
    <property type="term" value="P:negative regulation of leukocyte activation"/>
    <property type="evidence" value="ECO:0000250"/>
    <property type="project" value="UniProtKB"/>
</dbReference>
<dbReference type="GO" id="GO:0051055">
    <property type="term" value="P:negative regulation of lipid biosynthetic process"/>
    <property type="evidence" value="ECO:0000250"/>
    <property type="project" value="UniProtKB"/>
</dbReference>
<dbReference type="GO" id="GO:0051898">
    <property type="term" value="P:negative regulation of phosphatidylinositol 3-kinase/protein kinase B signal transduction"/>
    <property type="evidence" value="ECO:0000266"/>
    <property type="project" value="RGD"/>
</dbReference>
<dbReference type="GO" id="GO:1904753">
    <property type="term" value="P:negative regulation of vascular associated smooth muscle cell migration"/>
    <property type="evidence" value="ECO:0000266"/>
    <property type="project" value="RGD"/>
</dbReference>
<dbReference type="GO" id="GO:1904706">
    <property type="term" value="P:negative regulation of vascular associated smooth muscle cell proliferation"/>
    <property type="evidence" value="ECO:0000266"/>
    <property type="project" value="RGD"/>
</dbReference>
<dbReference type="GO" id="GO:0007399">
    <property type="term" value="P:nervous system development"/>
    <property type="evidence" value="ECO:0007669"/>
    <property type="project" value="UniProtKB-KW"/>
</dbReference>
<dbReference type="GO" id="GO:0019228">
    <property type="term" value="P:neuronal action potential"/>
    <property type="evidence" value="ECO:0000250"/>
    <property type="project" value="UniProtKB"/>
</dbReference>
<dbReference type="GO" id="GO:0030264">
    <property type="term" value="P:nuclear fragmentation involved in apoptotic nuclear change"/>
    <property type="evidence" value="ECO:0000314"/>
    <property type="project" value="UniProtKB"/>
</dbReference>
<dbReference type="GO" id="GO:0030518">
    <property type="term" value="P:nuclear receptor-mediated steroid hormone signaling pathway"/>
    <property type="evidence" value="ECO:0000314"/>
    <property type="project" value="RGD"/>
</dbReference>
<dbReference type="GO" id="GO:0043065">
    <property type="term" value="P:positive regulation of apoptotic process"/>
    <property type="evidence" value="ECO:0000314"/>
    <property type="project" value="UniProtKB"/>
</dbReference>
<dbReference type="GO" id="GO:2000724">
    <property type="term" value="P:positive regulation of cardiac vascular smooth muscle cell differentiation"/>
    <property type="evidence" value="ECO:0000266"/>
    <property type="project" value="RGD"/>
</dbReference>
<dbReference type="GO" id="GO:0030335">
    <property type="term" value="P:positive regulation of cell migration"/>
    <property type="evidence" value="ECO:0000250"/>
    <property type="project" value="UniProtKB"/>
</dbReference>
<dbReference type="GO" id="GO:0008284">
    <property type="term" value="P:positive regulation of cell population proliferation"/>
    <property type="evidence" value="ECO:0000250"/>
    <property type="project" value="UniProtKB"/>
</dbReference>
<dbReference type="GO" id="GO:0007204">
    <property type="term" value="P:positive regulation of cytosolic calcium ion concentration"/>
    <property type="evidence" value="ECO:0000250"/>
    <property type="project" value="UniProtKB"/>
</dbReference>
<dbReference type="GO" id="GO:2000353">
    <property type="term" value="P:positive regulation of endothelial cell apoptotic process"/>
    <property type="evidence" value="ECO:0000314"/>
    <property type="project" value="UniProtKB"/>
</dbReference>
<dbReference type="GO" id="GO:0045742">
    <property type="term" value="P:positive regulation of epidermal growth factor receptor signaling pathway"/>
    <property type="evidence" value="ECO:0000315"/>
    <property type="project" value="RGD"/>
</dbReference>
<dbReference type="GO" id="GO:0070374">
    <property type="term" value="P:positive regulation of ERK1 and ERK2 cascade"/>
    <property type="evidence" value="ECO:0000314"/>
    <property type="project" value="UniProtKB"/>
</dbReference>
<dbReference type="GO" id="GO:2001238">
    <property type="term" value="P:positive regulation of extrinsic apoptotic signaling pathway"/>
    <property type="evidence" value="ECO:0000314"/>
    <property type="project" value="UniProtKB"/>
</dbReference>
<dbReference type="GO" id="GO:0045745">
    <property type="term" value="P:positive regulation of G protein-coupled receptor signaling pathway"/>
    <property type="evidence" value="ECO:0000250"/>
    <property type="project" value="UniProtKB"/>
</dbReference>
<dbReference type="GO" id="GO:0010628">
    <property type="term" value="P:positive regulation of gene expression"/>
    <property type="evidence" value="ECO:0000314"/>
    <property type="project" value="UniProtKB"/>
</dbReference>
<dbReference type="GO" id="GO:0032962">
    <property type="term" value="P:positive regulation of inositol trisphosphate biosynthetic process"/>
    <property type="evidence" value="ECO:0000250"/>
    <property type="project" value="UniProtKB"/>
</dbReference>
<dbReference type="GO" id="GO:0032024">
    <property type="term" value="P:positive regulation of insulin secretion"/>
    <property type="evidence" value="ECO:0000250"/>
    <property type="project" value="UniProtKB"/>
</dbReference>
<dbReference type="GO" id="GO:0043410">
    <property type="term" value="P:positive regulation of MAPK cascade"/>
    <property type="evidence" value="ECO:0000250"/>
    <property type="project" value="UniProtKB"/>
</dbReference>
<dbReference type="GO" id="GO:0050769">
    <property type="term" value="P:positive regulation of neurogenesis"/>
    <property type="evidence" value="ECO:0000250"/>
    <property type="project" value="UniProtKB"/>
</dbReference>
<dbReference type="GO" id="GO:0001956">
    <property type="term" value="P:positive regulation of neurotransmitter secretion"/>
    <property type="evidence" value="ECO:0000250"/>
    <property type="project" value="UniProtKB"/>
</dbReference>
<dbReference type="GO" id="GO:0051897">
    <property type="term" value="P:positive regulation of phosphatidylinositol 3-kinase/protein kinase B signal transduction"/>
    <property type="evidence" value="ECO:0000314"/>
    <property type="project" value="RGD"/>
</dbReference>
<dbReference type="GO" id="GO:0042307">
    <property type="term" value="P:positive regulation of protein import into nucleus"/>
    <property type="evidence" value="ECO:0000315"/>
    <property type="project" value="RGD"/>
</dbReference>
<dbReference type="GO" id="GO:1903078">
    <property type="term" value="P:positive regulation of protein localization to plasma membrane"/>
    <property type="evidence" value="ECO:0000250"/>
    <property type="project" value="UniProtKB"/>
</dbReference>
<dbReference type="GO" id="GO:0090200">
    <property type="term" value="P:positive regulation of release of cytochrome c from mitochondria"/>
    <property type="evidence" value="ECO:0000314"/>
    <property type="project" value="UniProtKB"/>
</dbReference>
<dbReference type="GO" id="GO:0051281">
    <property type="term" value="P:positive regulation of release of sequestered calcium ion into cytosol"/>
    <property type="evidence" value="ECO:0000250"/>
    <property type="project" value="UniProtKB"/>
</dbReference>
<dbReference type="GO" id="GO:0045944">
    <property type="term" value="P:positive regulation of transcription by RNA polymerase II"/>
    <property type="evidence" value="ECO:0000250"/>
    <property type="project" value="UniProtKB"/>
</dbReference>
<dbReference type="GO" id="GO:0070474">
    <property type="term" value="P:positive regulation of uterine smooth muscle contraction"/>
    <property type="evidence" value="ECO:0000250"/>
    <property type="project" value="UniProtKB"/>
</dbReference>
<dbReference type="GO" id="GO:0051726">
    <property type="term" value="P:regulation of cell cycle"/>
    <property type="evidence" value="ECO:0000250"/>
    <property type="project" value="UniProtKB"/>
</dbReference>
<dbReference type="GO" id="GO:0051480">
    <property type="term" value="P:regulation of cytosolic calcium ion concentration"/>
    <property type="evidence" value="ECO:0000250"/>
    <property type="project" value="UniProtKB"/>
</dbReference>
<dbReference type="GO" id="GO:0007210">
    <property type="term" value="P:serotonin receptor signaling pathway"/>
    <property type="evidence" value="ECO:0000315"/>
    <property type="project" value="RGD"/>
</dbReference>
<dbReference type="GO" id="GO:0043401">
    <property type="term" value="P:steroid hormone receptor signaling pathway"/>
    <property type="evidence" value="ECO:0000266"/>
    <property type="project" value="RGD"/>
</dbReference>
<dbReference type="GO" id="GO:0042311">
    <property type="term" value="P:vasodilation"/>
    <property type="evidence" value="ECO:0000314"/>
    <property type="project" value="GO_Central"/>
</dbReference>
<dbReference type="CDD" id="cd14989">
    <property type="entry name" value="7tmA_GPER1"/>
    <property type="match status" value="1"/>
</dbReference>
<dbReference type="FunFam" id="1.20.1070.10:FF:000093">
    <property type="entry name" value="G-protein coupled estrogen receptor 1"/>
    <property type="match status" value="1"/>
</dbReference>
<dbReference type="Gene3D" id="1.20.1070.10">
    <property type="entry name" value="Rhodopsin 7-helix transmembrane proteins"/>
    <property type="match status" value="1"/>
</dbReference>
<dbReference type="InterPro" id="IPR000276">
    <property type="entry name" value="GPCR_Rhodpsn"/>
</dbReference>
<dbReference type="InterPro" id="IPR017452">
    <property type="entry name" value="GPCR_Rhodpsn_7TM"/>
</dbReference>
<dbReference type="InterPro" id="IPR047143">
    <property type="entry name" value="GPER1-like"/>
</dbReference>
<dbReference type="PANTHER" id="PTHR24226:SF2">
    <property type="entry name" value="G-PROTEIN COUPLED ESTROGEN RECEPTOR 1"/>
    <property type="match status" value="1"/>
</dbReference>
<dbReference type="PANTHER" id="PTHR24226">
    <property type="entry name" value="G-PROTEIN COUPLED RECEPTOR 182 AND ESTROGEN RECEPTOR 1"/>
    <property type="match status" value="1"/>
</dbReference>
<dbReference type="Pfam" id="PF00001">
    <property type="entry name" value="7tm_1"/>
    <property type="match status" value="1"/>
</dbReference>
<dbReference type="PRINTS" id="PR00237">
    <property type="entry name" value="GPCRRHODOPSN"/>
</dbReference>
<dbReference type="SUPFAM" id="SSF81321">
    <property type="entry name" value="Family A G protein-coupled receptor-like"/>
    <property type="match status" value="1"/>
</dbReference>
<dbReference type="PROSITE" id="PS00237">
    <property type="entry name" value="G_PROTEIN_RECEP_F1_1"/>
    <property type="match status" value="1"/>
</dbReference>
<dbReference type="PROSITE" id="PS50262">
    <property type="entry name" value="G_PROTEIN_RECEP_F1_2"/>
    <property type="match status" value="1"/>
</dbReference>
<gene>
    <name type="primary">Gper1</name>
    <name type="synonym">Cmkrl2</name>
    <name type="synonym">Gper</name>
    <name evidence="15" type="synonym">Gpr30</name>
    <name type="synonym">Gpr41</name>
</gene>
<evidence type="ECO:0000250" key="1"/>
<evidence type="ECO:0000250" key="2">
    <source>
        <dbReference type="UniProtKB" id="Q99527"/>
    </source>
</evidence>
<evidence type="ECO:0000255" key="3"/>
<evidence type="ECO:0000255" key="4">
    <source>
        <dbReference type="PROSITE-ProRule" id="PRU00521"/>
    </source>
</evidence>
<evidence type="ECO:0000269" key="5">
    <source>
    </source>
</evidence>
<evidence type="ECO:0000269" key="6">
    <source>
    </source>
</evidence>
<evidence type="ECO:0000269" key="7">
    <source>
    </source>
</evidence>
<evidence type="ECO:0000269" key="8">
    <source>
    </source>
</evidence>
<evidence type="ECO:0000269" key="9">
    <source>
    </source>
</evidence>
<evidence type="ECO:0000269" key="10">
    <source>
    </source>
</evidence>
<evidence type="ECO:0000269" key="11">
    <source>
    </source>
</evidence>
<evidence type="ECO:0000269" key="12">
    <source>
    </source>
</evidence>
<evidence type="ECO:0000269" key="13">
    <source>
    </source>
</evidence>
<evidence type="ECO:0000269" key="14">
    <source>
    </source>
</evidence>
<evidence type="ECO:0000303" key="15">
    <source>
    </source>
</evidence>
<evidence type="ECO:0000305" key="16"/>
<organism>
    <name type="scientific">Rattus norvegicus</name>
    <name type="common">Rat</name>
    <dbReference type="NCBI Taxonomy" id="10116"/>
    <lineage>
        <taxon>Eukaryota</taxon>
        <taxon>Metazoa</taxon>
        <taxon>Chordata</taxon>
        <taxon>Craniata</taxon>
        <taxon>Vertebrata</taxon>
        <taxon>Euteleostomi</taxon>
        <taxon>Mammalia</taxon>
        <taxon>Eutheria</taxon>
        <taxon>Euarchontoglires</taxon>
        <taxon>Glires</taxon>
        <taxon>Rodentia</taxon>
        <taxon>Myomorpha</taxon>
        <taxon>Muroidea</taxon>
        <taxon>Muridae</taxon>
        <taxon>Murinae</taxon>
        <taxon>Rattus</taxon>
    </lineage>
</organism>
<protein>
    <recommendedName>
        <fullName>G-protein coupled estrogen receptor 1</fullName>
    </recommendedName>
    <alternativeName>
        <fullName>Chemoattractant receptor-like 2</fullName>
    </alternativeName>
    <alternativeName>
        <fullName>G protein-coupled estrogen receptor 1</fullName>
    </alternativeName>
    <alternativeName>
        <fullName evidence="15">G-protein coupled receptor 30</fullName>
    </alternativeName>
    <alternativeName>
        <fullName>G-protein coupled receptor 41</fullName>
    </alternativeName>
    <alternativeName>
        <fullName>Membrane estrogen receptor</fullName>
        <shortName>mER</shortName>
    </alternativeName>
</protein>
<reference key="1">
    <citation type="journal article" date="1997" name="Biochem. Biophys. Res. Commun.">
        <title>Molecular cloning and tissue expression of a novel orphan G protein-coupled receptor from rat lung.</title>
        <authorList>
            <person name="Bonini J.A."/>
            <person name="Anderson S.M."/>
            <person name="Steiner D.F."/>
        </authorList>
    </citation>
    <scope>NUCLEOTIDE SEQUENCE [MRNA]</scope>
    <scope>TISSUE SPECIFICITY</scope>
    <source>
        <strain>Sprague-Dawley</strain>
        <tissue>Lung</tissue>
    </source>
</reference>
<reference key="2">
    <citation type="journal article" date="2006" name="Biochem. Biophys. Res. Commun.">
        <title>G protein-coupled receptor 30 is an estrogen receptor in the plasma membrane.</title>
        <authorList>
            <person name="Funakoshi T."/>
            <person name="Yanai A."/>
            <person name="Shinoda K."/>
            <person name="Kawano M.M."/>
            <person name="Mizukami Y."/>
        </authorList>
    </citation>
    <scope>SUBCELLULAR LOCATION</scope>
</reference>
<reference key="3">
    <citation type="journal article" date="2007" name="Endocrinology">
        <title>Expression of G protein-coupled receptor-30, a G protein-coupled membrane estrogen receptor, in oxytocin neurons of the rat paraventricular and supraoptic nuclei.</title>
        <authorList>
            <person name="Sakamoto H."/>
            <person name="Matsuda K."/>
            <person name="Hosokawa K."/>
            <person name="Nishi M."/>
            <person name="Morris J.F."/>
            <person name="Prossnitz E.R."/>
            <person name="Kawata M."/>
        </authorList>
    </citation>
    <scope>SUBCELLULAR LOCATION</scope>
    <scope>TISSUE SPECIFICITY</scope>
</reference>
<reference key="4">
    <citation type="journal article" date="2009" name="Circ. Res.">
        <title>Regulatory role of G protein-coupled estrogen receptor for vascular function and obesity.</title>
        <authorList>
            <person name="Haas E."/>
            <person name="Bhattacharya I."/>
            <person name="Brailoiu E."/>
            <person name="Damjanovic M."/>
            <person name="Brailoiu G.C."/>
            <person name="Gao X."/>
            <person name="Mueller-Guerre L."/>
            <person name="Marjon N.A."/>
            <person name="Gut A."/>
            <person name="Minotti R."/>
            <person name="Meyer M.R."/>
            <person name="Amann K."/>
            <person name="Ammann E."/>
            <person name="Perez-Dominguez A."/>
            <person name="Genoni M."/>
            <person name="Clegg D.J."/>
            <person name="Dun N.J."/>
            <person name="Resta T.C."/>
            <person name="Prossnitz E.R."/>
            <person name="Barton M."/>
        </authorList>
    </citation>
    <scope>FUNCTION</scope>
</reference>
<reference key="5">
    <citation type="journal article" date="2009" name="J. Endocrinol.">
        <title>Localisation of GPR30, a novel G protein-coupled oestrogen receptor, suggests multiple functions in rodent brain and peripheral tissues.</title>
        <authorList>
            <person name="Hazell G.G."/>
            <person name="Yao S.T."/>
            <person name="Roper J.A."/>
            <person name="Prossnitz E.R."/>
            <person name="O'Carroll A.M."/>
            <person name="Lolait S.J."/>
        </authorList>
    </citation>
    <scope>TISSUE SPECIFICITY</scope>
</reference>
<reference key="6">
    <citation type="journal article" date="2010" name="Mol. Cell. Endocrinol.">
        <title>17 beta-estradiol activates rapid signaling pathways involved in rat pachytene spermatocytes apoptosis through GPR30 and ER alpha.</title>
        <authorList>
            <person name="Chimento A."/>
            <person name="Sirianni R."/>
            <person name="Delalande C."/>
            <person name="Silandre D."/>
            <person name="Bois C."/>
            <person name="Ando S."/>
            <person name="Maggiolini M."/>
            <person name="Carreau S."/>
            <person name="Pezzi V."/>
        </authorList>
    </citation>
    <scope>FUNCTION</scope>
    <scope>SUBCELLULAR LOCATION</scope>
    <scope>TISSUE SPECIFICITY</scope>
</reference>
<reference key="7">
    <citation type="journal article" date="2011" name="Hypertension">
        <title>GPR30 expression is required for the mineralocorticoid receptor-independent rapid vascular effects of aldosterone.</title>
        <authorList>
            <person name="Gros R."/>
            <person name="Ding Q."/>
            <person name="Sklar L.A."/>
            <person name="Prossnitz E.E."/>
            <person name="Arterburn J.B."/>
            <person name="Chorazyczewski J."/>
            <person name="Feldman R.D."/>
        </authorList>
    </citation>
    <scope>TISSUE SPECIFICITY</scope>
</reference>
<reference key="8">
    <citation type="journal article" date="2011" name="Steroids">
        <title>Retrograde transport of the transmembrane estrogen receptor, G-protein-coupled-receptor-30 (GPR30/GPER) from the plasma membrane towards the nucleus.</title>
        <authorList>
            <person name="Cheng S.B."/>
            <person name="Graeber C.T."/>
            <person name="Quinn J.A."/>
            <person name="Filardo E.J."/>
        </authorList>
    </citation>
    <scope>SUBCELLULAR LOCATION</scope>
    <scope>TISSUE SPECIFICITY</scope>
</reference>
<reference key="9">
    <citation type="journal article" date="2012" name="Endocrinology">
        <title>Estrogen receptors are found in glia and at extranuclear neuronal sites in the dorsal striatum of female rats: evidence for cholinergic but not dopaminergic colocalization.</title>
        <authorList>
            <person name="Almey A."/>
            <person name="Filardo E.J."/>
            <person name="Milner T.A."/>
            <person name="Brake W.G."/>
        </authorList>
    </citation>
    <scope>SUBCELLULAR LOCATION</scope>
    <scope>TISSUE SPECIFICITY</scope>
</reference>
<reference key="10">
    <citation type="journal article" date="2012" name="Steroids">
        <title>Role of ERbeta and GPR30 in the endocrine pancreas: A matter of estrogen dose.</title>
        <authorList>
            <person name="Ropero A.B."/>
            <person name="Pang Y."/>
            <person name="Alonso-Magdalena P."/>
            <person name="Thomas P."/>
            <person name="Nadal A."/>
        </authorList>
    </citation>
    <scope>ESTROGEN-BINDING</scope>
    <scope>SUBCELLULAR LOCATION</scope>
</reference>
<reference key="11">
    <citation type="journal article" date="2013" name="Am. J. Physiol.">
        <title>Aldosterone mediates its rapid effects in vascular endothelial cells through GPER activation.</title>
        <authorList>
            <person name="Gros R."/>
            <person name="Ding Q."/>
            <person name="Liu B."/>
            <person name="Chorazyczewski J."/>
            <person name="Feldman R.D."/>
        </authorList>
    </citation>
    <scope>TISSUE SPECIFICITY</scope>
</reference>
<reference key="12">
    <citation type="journal article" date="2013" name="J. Biol. Chem.">
        <title>Post-synaptic density-95 (PSD-95) binding capacity of G-protein-coupled receptor 30 (GPR30), an estrogen receptor that can be identified in hippocampal dendritic spines.</title>
        <authorList>
            <person name="Akama K.T."/>
            <person name="Thompson L.I."/>
            <person name="Milner T.A."/>
            <person name="McEwen B.S."/>
        </authorList>
    </citation>
    <scope>INTERACTION WITH DLG4</scope>
    <scope>SUBCELLULAR LOCATION</scope>
    <scope>TISSUE SPECIFICITY</scope>
</reference>
<reference key="13">
    <citation type="journal article" date="2013" name="J. Neuroendocrinol.">
        <title>GPER 1: trials and tribulations of a membrane oestrogen receptor.</title>
        <authorList>
            <person name="Srivastava D.P."/>
            <person name="Evans P.D."/>
        </authorList>
    </citation>
    <scope>REVIEW</scope>
    <scope>SUBCELLULAR LOCATION</scope>
</reference>
<comment type="function">
    <text evidence="6 8">G-protein coupled estrogen receptor that binds to 17-beta-estradiol (E2) with high affinity, leading to rapid and transient activation of numerous intracellular signaling pathways. Stimulates cAMP production, calcium mobilization and tyrosine kinase Src inducing the release of heparin-bound epidermal growth factor (HB-EGF) and subsequent transactivation of the epidermal growth factor receptor (EGFR), activating downstream signaling pathways such as PI3K/Akt and ERK/MAPK. Mediates pleiotropic functions among others in the cardiovascular, endocrine, reproductive, immune and central nervous systems. Has a role in cardioprotection by reducing cardiac hypertrophy and perivascular fibrosis in a RAMP3-dependent manner. Regulates arterial blood pressure by stimulating vasodilation and reducing vascular smooth muscle and microvascular endothelial cell proliferation. Plays a role in blood glucose homeostasis contributing to the insulin secretion response by pancreatic beta cells. Triggers mitochondrial apoptosis during pachytene spermatocyte differentiation. Stimulates uterine epithelial cell proliferation. Enhances uterine contractility in response to oxytocin. Contributes to thymic atrophy by inducing apoptosis. Attenuates TNF-mediated endothelial expression of leukocyte adhesion molecules. Promotes neuritogenesis in developing hippocampal neurons. Plays a role in acute neuroprotection against NMDA-induced excitotoxic neuronal death. Increases firing activity and intracellular calcium oscillations in luteinizing hormone-releasing hormone (LHRH) neurons. Inhibits early osteoblast proliferation at growth plate during skeletal development. Inhibits mature adipocyte differentiation and lipid accumulation. Involved in the recruitment of beta-arrestin 2 ARRB2 at the plasma membrane in epithelial cells. Also functions as a receptor for aldosterone mediating rapid regulation of vascular contractibility through the PI3K/ERK signaling pathway. Involved in cancer progression regulation. Stimulates cancer-associated fibroblast (CAF) proliferation by a rapid genomic response through the EGFR/ERK transduction pathway. Associated with EGFR, may act as a transcription factor activating growth regulatory genes (c-fos, cyclin D1). Promotes integrin alpha-5/beta-1 and fibronectin (FN) matrix assembly in breast cancer cells.</text>
</comment>
<comment type="subunit">
    <text evidence="1 13 16">Homodimer (Probable). Heterodimer; heterodimerizes with other G-protein-coupled receptor (GPCRs) like CRHR1, HTR1A and PAQR8. Interacts with RAMP3; the interaction confers proper subcellular localization and function in cardioprotection. Interacts with KRT7 and KRT8. Interacts with EGFR; the interaction increases after agonist-induced stimulation in cancer-associated fibroblasts (CAF). Interacts with EGFR and ESR1 (By similarity). Interacts (via C-terminus tail motif) with DLG4 (via N-terminus tandem pair of PDZ domains); the interaction is direct and induces the increase of GPER1 protein levels residing at the plasma membrane surface in a estradiol-independent manner.</text>
</comment>
<comment type="subcellular location">
    <subcellularLocation>
        <location evidence="1">Nucleus</location>
    </subcellularLocation>
    <subcellularLocation>
        <location evidence="1">Cytoplasm</location>
        <location evidence="1">Perinuclear region</location>
    </subcellularLocation>
    <subcellularLocation>
        <location evidence="11">Cytoplasm</location>
    </subcellularLocation>
    <subcellularLocation>
        <location evidence="11">Cytoplasm</location>
        <location evidence="11">Cytoskeleton</location>
    </subcellularLocation>
    <subcellularLocation>
        <location evidence="1">Cytoplasmic vesicle membrane</location>
        <topology evidence="1">Multi-pass membrane protein</topology>
    </subcellularLocation>
    <subcellularLocation>
        <location>Cell membrane</location>
        <topology>Multi-pass membrane protein</topology>
    </subcellularLocation>
    <subcellularLocation>
        <location>Basolateral cell membrane</location>
        <topology>Multi-pass membrane protein</topology>
    </subcellularLocation>
    <subcellularLocation>
        <location evidence="9">Endoplasmic reticulum membrane</location>
        <topology evidence="1">Multi-pass membrane protein</topology>
    </subcellularLocation>
    <subcellularLocation>
        <location evidence="1">Early endosome</location>
    </subcellularLocation>
    <subcellularLocation>
        <location evidence="1">Recycling endosome</location>
    </subcellularLocation>
    <subcellularLocation>
        <location evidence="1">Golgi apparatus</location>
        <location evidence="1">trans-Golgi network</location>
    </subcellularLocation>
    <subcellularLocation>
        <location evidence="9 11">Golgi apparatus membrane</location>
        <topology>Multi-pass membrane protein</topology>
    </subcellularLocation>
    <subcellularLocation>
        <location>Cell projection</location>
        <location>Dendrite</location>
    </subcellularLocation>
    <subcellularLocation>
        <location evidence="11 13">Cell projection</location>
        <location evidence="11 13">Dendritic spine membrane</location>
        <topology>Multi-pass membrane protein</topology>
    </subcellularLocation>
    <subcellularLocation>
        <location evidence="11">Cell projection</location>
        <location evidence="11">Axon</location>
    </subcellularLocation>
    <subcellularLocation>
        <location evidence="11 13">Postsynaptic density</location>
    </subcellularLocation>
    <subcellularLocation>
        <location evidence="11">Mitochondrion membrane</location>
        <topology>Multi-pass membrane protein</topology>
    </subcellularLocation>
    <text evidence="1">Endocytosed in an agonist- and arrestin-independent manner. Colocalized with RAMP3 and clathrin-coated pits at the plasma membrane. Colocalized with transferrin receptor at the plasma membrane and perinuclear region. Accumulated and colocalized with RAB11 proteins in recycling endosomes and trans-Golgi network (TGN), but does neither recycle back to the cell surface nor traffics to late endosome or lysosome. Colocalized with calnexin in the endoplasmic reticulum. Traffics to intracellular sites via cytokeratin intermediate filaments like KRT7 and KRT8 after constitutive endocytosis in epithelial cells. Colocalized with EGFR in the nucleus of agonist-induced cancer-associated fibroblasts (CAF) (By similarity). Colocalized with BSN to the active zone of presynaptic density. Colocalized with DLG4/PSD95 and neurabin-2 PPP1R9B in neuronal synaptosomes.</text>
</comment>
<comment type="tissue specificity">
    <text evidence="5 7 8 9 10 11 12 13 14">Expressed in the brain. Expressed in neurons of the hippocampus, hypothalamic paraventricular nucleus (PVN), supraoptic nucleus (SON) and the median eminence. Expressed in magnocellular neurosecretory cells (MNCs) which secrete oxytocin but not in MNCs which secrete vasopressin. Expressed in glial cells. Expressed in the nucleus ambiguous. Expressed in epithelial cells, in pachytene spermatocytes (PS) (at protein level). Expressed strongly in vascular endothelial cells and poorly in vascular smooth muscle cells (VSMC). Expressed in the brain, lung, pituitary gland, adrenal medulla, renal pelvis and ovary. Expressed in CA1 hippocampus. Expressed weakly in heart, skeletal muscle and kidney.</text>
</comment>
<comment type="PTM">
    <text evidence="1">Ubiquitinated; ubiquitination occurs at the plasma membrane and leads to proteasome-mediated degradation.</text>
</comment>
<comment type="PTM">
    <text evidence="1">Glycosylated.</text>
</comment>
<comment type="similarity">
    <text evidence="4">Belongs to the G-protein coupled receptor 1 family.</text>
</comment>
<keyword id="KW-0007">Acetylation</keyword>
<keyword id="KW-0053">Apoptosis</keyword>
<keyword id="KW-0131">Cell cycle</keyword>
<keyword id="KW-1003">Cell membrane</keyword>
<keyword id="KW-0966">Cell projection</keyword>
<keyword id="KW-0963">Cytoplasm</keyword>
<keyword id="KW-0968">Cytoplasmic vesicle</keyword>
<keyword id="KW-0206">Cytoskeleton</keyword>
<keyword id="KW-0221">Differentiation</keyword>
<keyword id="KW-1015">Disulfide bond</keyword>
<keyword id="KW-0256">Endoplasmic reticulum</keyword>
<keyword id="KW-0967">Endosome</keyword>
<keyword id="KW-0297">G-protein coupled receptor</keyword>
<keyword id="KW-0325">Glycoprotein</keyword>
<keyword id="KW-0333">Golgi apparatus</keyword>
<keyword id="KW-0391">Immunity</keyword>
<keyword id="KW-0395">Inflammatory response</keyword>
<keyword id="KW-0399">Innate immunity</keyword>
<keyword id="KW-0472">Membrane</keyword>
<keyword id="KW-0496">Mitochondrion</keyword>
<keyword id="KW-0524">Neurogenesis</keyword>
<keyword id="KW-0539">Nucleus</keyword>
<keyword id="KW-0628">Postsynaptic cell membrane</keyword>
<keyword id="KW-0675">Receptor</keyword>
<keyword id="KW-1185">Reference proteome</keyword>
<keyword id="KW-0770">Synapse</keyword>
<keyword id="KW-0807">Transducer</keyword>
<keyword id="KW-0812">Transmembrane</keyword>
<keyword id="KW-1133">Transmembrane helix</keyword>
<keyword id="KW-0832">Ubl conjugation</keyword>
<accession>O08878</accession>
<feature type="chain" id="PRO_0000069312" description="G-protein coupled estrogen receptor 1">
    <location>
        <begin position="1"/>
        <end position="375"/>
    </location>
</feature>
<feature type="topological domain" description="Extracellular" evidence="3">
    <location>
        <begin position="1"/>
        <end position="62"/>
    </location>
</feature>
<feature type="transmembrane region" description="Helical; Name=1" evidence="3">
    <location>
        <begin position="63"/>
        <end position="84"/>
    </location>
</feature>
<feature type="topological domain" description="Cytoplasmic" evidence="3">
    <location>
        <begin position="85"/>
        <end position="96"/>
    </location>
</feature>
<feature type="transmembrane region" description="Helical; Name=2" evidence="3">
    <location>
        <begin position="97"/>
        <end position="120"/>
    </location>
</feature>
<feature type="topological domain" description="Extracellular" evidence="3">
    <location>
        <begin position="121"/>
        <end position="132"/>
    </location>
</feature>
<feature type="transmembrane region" description="Helical; Name=3" evidence="3">
    <location>
        <begin position="133"/>
        <end position="153"/>
    </location>
</feature>
<feature type="topological domain" description="Cytoplasmic" evidence="3">
    <location>
        <begin position="154"/>
        <end position="175"/>
    </location>
</feature>
<feature type="transmembrane region" description="Helical; Name=4" evidence="3">
    <location>
        <begin position="176"/>
        <end position="194"/>
    </location>
</feature>
<feature type="topological domain" description="Extracellular" evidence="3">
    <location>
        <begin position="195"/>
        <end position="220"/>
    </location>
</feature>
<feature type="transmembrane region" description="Helical; Name=5" evidence="3">
    <location>
        <begin position="221"/>
        <end position="236"/>
    </location>
</feature>
<feature type="topological domain" description="Cytoplasmic" evidence="3">
    <location>
        <begin position="237"/>
        <end position="259"/>
    </location>
</feature>
<feature type="transmembrane region" description="Helical; Name=6" evidence="3">
    <location>
        <begin position="260"/>
        <end position="280"/>
    </location>
</feature>
<feature type="topological domain" description="Extracellular" evidence="3">
    <location>
        <begin position="281"/>
        <end position="306"/>
    </location>
</feature>
<feature type="transmembrane region" description="Helical; Name=7" evidence="3">
    <location>
        <begin position="307"/>
        <end position="327"/>
    </location>
</feature>
<feature type="topological domain" description="Cytoplasmic" evidence="3">
    <location>
        <begin position="328"/>
        <end position="375"/>
    </location>
</feature>
<feature type="modified residue" description="N-acetylmethionine" evidence="2">
    <location>
        <position position="1"/>
    </location>
</feature>
<feature type="glycosylation site" description="N-linked (GlcNAc...) asparagine" evidence="3">
    <location>
        <position position="32"/>
    </location>
</feature>
<feature type="glycosylation site" description="N-linked (GlcNAc...) asparagine" evidence="3">
    <location>
        <position position="44"/>
    </location>
</feature>
<feature type="disulfide bond" evidence="4">
    <location>
        <begin position="130"/>
        <end position="207"/>
    </location>
</feature>